<name>CYOE_ACIBY</name>
<sequence>MLKKYLFLTKPGILFGNFITTLGGFFLAAQGSIDILLLLLTLIGTTLVVASGCVVNNVIDQDIDTKMQRTQNRALVKKTISPTVALVYAFVLGVMGFSILWFGVNGYAFLFAMIGFIVYVGFYSLWTKRTSIHQTVIGSISGASPPVIGYTAVTHQFDVAALLLFLAYALWQMPHSWAIAIYRFDDYKNAGIPILPVARSIYRTKIECVIYILLFAAVLNGLYCFGYTNVFFLITFNALTAYWFYLSIIGFKAENDQLWAKRFFLYSVILITLLSLSFSFTYQSPAPNLPLF</sequence>
<accession>B0V7G8</accession>
<proteinExistence type="inferred from homology"/>
<evidence type="ECO:0000255" key="1">
    <source>
        <dbReference type="HAMAP-Rule" id="MF_00154"/>
    </source>
</evidence>
<dbReference type="EC" id="2.5.1.141" evidence="1"/>
<dbReference type="EMBL" id="CU459141">
    <property type="protein sequence ID" value="CAM86298.1"/>
    <property type="molecule type" value="Genomic_DNA"/>
</dbReference>
<dbReference type="RefSeq" id="WP_000915319.1">
    <property type="nucleotide sequence ID" value="NZ_JBDGFB010000016.1"/>
</dbReference>
<dbReference type="SMR" id="B0V7G8"/>
<dbReference type="EnsemblBacteria" id="CAM86298">
    <property type="protein sequence ID" value="CAM86298"/>
    <property type="gene ID" value="ABAYE1385"/>
</dbReference>
<dbReference type="KEGG" id="aby:ABAYE1385"/>
<dbReference type="HOGENOM" id="CLU_029631_0_0_6"/>
<dbReference type="UniPathway" id="UPA00834">
    <property type="reaction ID" value="UER00712"/>
</dbReference>
<dbReference type="GO" id="GO:0005886">
    <property type="term" value="C:plasma membrane"/>
    <property type="evidence" value="ECO:0007669"/>
    <property type="project" value="UniProtKB-SubCell"/>
</dbReference>
<dbReference type="GO" id="GO:0008495">
    <property type="term" value="F:protoheme IX farnesyltransferase activity"/>
    <property type="evidence" value="ECO:0007669"/>
    <property type="project" value="UniProtKB-UniRule"/>
</dbReference>
<dbReference type="GO" id="GO:0048034">
    <property type="term" value="P:heme O biosynthetic process"/>
    <property type="evidence" value="ECO:0007669"/>
    <property type="project" value="UniProtKB-UniRule"/>
</dbReference>
<dbReference type="CDD" id="cd13957">
    <property type="entry name" value="PT_UbiA_Cox10"/>
    <property type="match status" value="1"/>
</dbReference>
<dbReference type="FunFam" id="1.10.357.140:FF:000001">
    <property type="entry name" value="Protoheme IX farnesyltransferase"/>
    <property type="match status" value="1"/>
</dbReference>
<dbReference type="Gene3D" id="1.10.357.140">
    <property type="entry name" value="UbiA prenyltransferase"/>
    <property type="match status" value="1"/>
</dbReference>
<dbReference type="HAMAP" id="MF_00154">
    <property type="entry name" value="CyoE_CtaB"/>
    <property type="match status" value="1"/>
</dbReference>
<dbReference type="InterPro" id="IPR006369">
    <property type="entry name" value="Protohaem_IX_farnesylTrfase"/>
</dbReference>
<dbReference type="InterPro" id="IPR000537">
    <property type="entry name" value="UbiA_prenyltransferase"/>
</dbReference>
<dbReference type="InterPro" id="IPR030470">
    <property type="entry name" value="UbiA_prenylTrfase_CS"/>
</dbReference>
<dbReference type="InterPro" id="IPR044878">
    <property type="entry name" value="UbiA_sf"/>
</dbReference>
<dbReference type="NCBIfam" id="TIGR01473">
    <property type="entry name" value="cyoE_ctaB"/>
    <property type="match status" value="1"/>
</dbReference>
<dbReference type="NCBIfam" id="NF003348">
    <property type="entry name" value="PRK04375.1-1"/>
    <property type="match status" value="1"/>
</dbReference>
<dbReference type="PANTHER" id="PTHR43448">
    <property type="entry name" value="PROTOHEME IX FARNESYLTRANSFERASE, MITOCHONDRIAL"/>
    <property type="match status" value="1"/>
</dbReference>
<dbReference type="PANTHER" id="PTHR43448:SF2">
    <property type="entry name" value="PROTOHEME IX FARNESYLTRANSFERASE, MITOCHONDRIAL"/>
    <property type="match status" value="1"/>
</dbReference>
<dbReference type="Pfam" id="PF01040">
    <property type="entry name" value="UbiA"/>
    <property type="match status" value="1"/>
</dbReference>
<dbReference type="PROSITE" id="PS00943">
    <property type="entry name" value="UBIA"/>
    <property type="match status" value="1"/>
</dbReference>
<protein>
    <recommendedName>
        <fullName evidence="1">Protoheme IX farnesyltransferase</fullName>
        <ecNumber evidence="1">2.5.1.141</ecNumber>
    </recommendedName>
    <alternativeName>
        <fullName evidence="1">Heme B farnesyltransferase</fullName>
    </alternativeName>
    <alternativeName>
        <fullName evidence="1">Heme O synthase</fullName>
    </alternativeName>
</protein>
<gene>
    <name evidence="1" type="primary">cyoE</name>
    <name type="ordered locus">ABAYE1385</name>
</gene>
<reference key="1">
    <citation type="journal article" date="2008" name="PLoS ONE">
        <title>Comparative analysis of Acinetobacters: three genomes for three lifestyles.</title>
        <authorList>
            <person name="Vallenet D."/>
            <person name="Nordmann P."/>
            <person name="Barbe V."/>
            <person name="Poirel L."/>
            <person name="Mangenot S."/>
            <person name="Bataille E."/>
            <person name="Dossat C."/>
            <person name="Gas S."/>
            <person name="Kreimeyer A."/>
            <person name="Lenoble P."/>
            <person name="Oztas S."/>
            <person name="Poulain J."/>
            <person name="Segurens B."/>
            <person name="Robert C."/>
            <person name="Abergel C."/>
            <person name="Claverie J.-M."/>
            <person name="Raoult D."/>
            <person name="Medigue C."/>
            <person name="Weissenbach J."/>
            <person name="Cruveiller S."/>
        </authorList>
    </citation>
    <scope>NUCLEOTIDE SEQUENCE [LARGE SCALE GENOMIC DNA]</scope>
    <source>
        <strain>AYE</strain>
    </source>
</reference>
<comment type="function">
    <text evidence="1">Converts heme B (protoheme IX) to heme O by substitution of the vinyl group on carbon 2 of heme B porphyrin ring with a hydroxyethyl farnesyl side group.</text>
</comment>
<comment type="catalytic activity">
    <reaction evidence="1">
        <text>heme b + (2E,6E)-farnesyl diphosphate + H2O = Fe(II)-heme o + diphosphate</text>
        <dbReference type="Rhea" id="RHEA:28070"/>
        <dbReference type="ChEBI" id="CHEBI:15377"/>
        <dbReference type="ChEBI" id="CHEBI:33019"/>
        <dbReference type="ChEBI" id="CHEBI:60344"/>
        <dbReference type="ChEBI" id="CHEBI:60530"/>
        <dbReference type="ChEBI" id="CHEBI:175763"/>
        <dbReference type="EC" id="2.5.1.141"/>
    </reaction>
</comment>
<comment type="pathway">
    <text evidence="1">Porphyrin-containing compound metabolism; heme O biosynthesis; heme O from protoheme: step 1/1.</text>
</comment>
<comment type="subcellular location">
    <subcellularLocation>
        <location evidence="1">Cell inner membrane</location>
        <topology evidence="1">Multi-pass membrane protein</topology>
    </subcellularLocation>
</comment>
<comment type="miscellaneous">
    <text evidence="1">Carbon 2 of the heme B porphyrin ring is defined according to the Fischer nomenclature.</text>
</comment>
<comment type="similarity">
    <text evidence="1">Belongs to the UbiA prenyltransferase family. Protoheme IX farnesyltransferase subfamily.</text>
</comment>
<feature type="chain" id="PRO_0000345989" description="Protoheme IX farnesyltransferase">
    <location>
        <begin position="1"/>
        <end position="292"/>
    </location>
</feature>
<feature type="transmembrane region" description="Helical" evidence="1">
    <location>
        <begin position="13"/>
        <end position="33"/>
    </location>
</feature>
<feature type="transmembrane region" description="Helical" evidence="1">
    <location>
        <begin position="35"/>
        <end position="55"/>
    </location>
</feature>
<feature type="transmembrane region" description="Helical" evidence="1">
    <location>
        <begin position="84"/>
        <end position="104"/>
    </location>
</feature>
<feature type="transmembrane region" description="Helical" evidence="1">
    <location>
        <begin position="106"/>
        <end position="126"/>
    </location>
</feature>
<feature type="transmembrane region" description="Helical" evidence="1">
    <location>
        <begin position="135"/>
        <end position="155"/>
    </location>
</feature>
<feature type="transmembrane region" description="Helical" evidence="1">
    <location>
        <begin position="161"/>
        <end position="181"/>
    </location>
</feature>
<feature type="transmembrane region" description="Helical" evidence="1">
    <location>
        <begin position="206"/>
        <end position="226"/>
    </location>
</feature>
<feature type="transmembrane region" description="Helical" evidence="1">
    <location>
        <begin position="231"/>
        <end position="251"/>
    </location>
</feature>
<feature type="transmembrane region" description="Helical" evidence="1">
    <location>
        <begin position="263"/>
        <end position="283"/>
    </location>
</feature>
<keyword id="KW-0997">Cell inner membrane</keyword>
<keyword id="KW-1003">Cell membrane</keyword>
<keyword id="KW-0350">Heme biosynthesis</keyword>
<keyword id="KW-0472">Membrane</keyword>
<keyword id="KW-0808">Transferase</keyword>
<keyword id="KW-0812">Transmembrane</keyword>
<keyword id="KW-1133">Transmembrane helix</keyword>
<organism>
    <name type="scientific">Acinetobacter baumannii (strain AYE)</name>
    <dbReference type="NCBI Taxonomy" id="509173"/>
    <lineage>
        <taxon>Bacteria</taxon>
        <taxon>Pseudomonadati</taxon>
        <taxon>Pseudomonadota</taxon>
        <taxon>Gammaproteobacteria</taxon>
        <taxon>Moraxellales</taxon>
        <taxon>Moraxellaceae</taxon>
        <taxon>Acinetobacter</taxon>
        <taxon>Acinetobacter calcoaceticus/baumannii complex</taxon>
    </lineage>
</organism>